<proteinExistence type="inferred from homology"/>
<sequence length="458" mass="51036">MLLILPEITLTLIALLGQCFALMIPNKNKIIYNIVILLCIISIFLTFKYSSYEGIWHSFATGINIGISKSIVLLFTIVSLIIYRDYSNLIGEAIKFEFITLILLSIVGIFVAISSRNFLLLFCGMELTALTSYALAGFKLDDIQSSEGALKYFILGSLVTCLSLFGISFIYGFGGSIQFEDILHQLNNNSEIKPGLIIGIVLFLSSIFFKLASSPLHFWIPDVYEGSPISSITYFTSAAKIGMVIVLFNISKLIIGNYYPINYNLIKIIAILSMLFGAFGAIQQTSLKRLMAYSTILNIGYVLIGVILPNQEGYKAALLYILIYAVVSIGFFTCLIMLFGKDVDKASFKTIQGIAETHKTIAALISIVMFSMIGIPPLTGFFGKYYLFYQAINKQEFTLAYCGIFTSVVAAFYYLKVVKAMYFSKKNSIIKLPIQYGLLLINYLVLVFLLFGSFIILF</sequence>
<dbReference type="EC" id="7.1.1.-" evidence="1"/>
<dbReference type="EMBL" id="AE017197">
    <property type="protein sequence ID" value="AAU03995.1"/>
    <property type="molecule type" value="Genomic_DNA"/>
</dbReference>
<dbReference type="RefSeq" id="WP_011190976.1">
    <property type="nucleotide sequence ID" value="NC_006142.1"/>
</dbReference>
<dbReference type="SMR" id="Q68WJ7"/>
<dbReference type="KEGG" id="rty:RT0526"/>
<dbReference type="eggNOG" id="COG1007">
    <property type="taxonomic scope" value="Bacteria"/>
</dbReference>
<dbReference type="HOGENOM" id="CLU_007100_1_3_5"/>
<dbReference type="OrthoDB" id="9811718at2"/>
<dbReference type="Proteomes" id="UP000000604">
    <property type="component" value="Chromosome"/>
</dbReference>
<dbReference type="GO" id="GO:0005886">
    <property type="term" value="C:plasma membrane"/>
    <property type="evidence" value="ECO:0007669"/>
    <property type="project" value="UniProtKB-SubCell"/>
</dbReference>
<dbReference type="GO" id="GO:0008137">
    <property type="term" value="F:NADH dehydrogenase (ubiquinone) activity"/>
    <property type="evidence" value="ECO:0007669"/>
    <property type="project" value="InterPro"/>
</dbReference>
<dbReference type="GO" id="GO:0050136">
    <property type="term" value="F:NADH:ubiquinone reductase (non-electrogenic) activity"/>
    <property type="evidence" value="ECO:0007669"/>
    <property type="project" value="UniProtKB-UniRule"/>
</dbReference>
<dbReference type="GO" id="GO:0048038">
    <property type="term" value="F:quinone binding"/>
    <property type="evidence" value="ECO:0007669"/>
    <property type="project" value="UniProtKB-KW"/>
</dbReference>
<dbReference type="GO" id="GO:0042773">
    <property type="term" value="P:ATP synthesis coupled electron transport"/>
    <property type="evidence" value="ECO:0007669"/>
    <property type="project" value="InterPro"/>
</dbReference>
<dbReference type="HAMAP" id="MF_00445">
    <property type="entry name" value="NDH1_NuoN_1"/>
    <property type="match status" value="1"/>
</dbReference>
<dbReference type="InterPro" id="IPR010096">
    <property type="entry name" value="NADH-Q_OxRdtase_suN/2"/>
</dbReference>
<dbReference type="InterPro" id="IPR001750">
    <property type="entry name" value="ND/Mrp_TM"/>
</dbReference>
<dbReference type="NCBIfam" id="TIGR01770">
    <property type="entry name" value="NDH_I_N"/>
    <property type="match status" value="1"/>
</dbReference>
<dbReference type="NCBIfam" id="NF004447">
    <property type="entry name" value="PRK05777.2-5"/>
    <property type="match status" value="1"/>
</dbReference>
<dbReference type="PANTHER" id="PTHR22773">
    <property type="entry name" value="NADH DEHYDROGENASE"/>
    <property type="match status" value="1"/>
</dbReference>
<dbReference type="Pfam" id="PF00361">
    <property type="entry name" value="Proton_antipo_M"/>
    <property type="match status" value="1"/>
</dbReference>
<organism>
    <name type="scientific">Rickettsia typhi (strain ATCC VR-144 / Wilmington)</name>
    <dbReference type="NCBI Taxonomy" id="257363"/>
    <lineage>
        <taxon>Bacteria</taxon>
        <taxon>Pseudomonadati</taxon>
        <taxon>Pseudomonadota</taxon>
        <taxon>Alphaproteobacteria</taxon>
        <taxon>Rickettsiales</taxon>
        <taxon>Rickettsiaceae</taxon>
        <taxon>Rickettsieae</taxon>
        <taxon>Rickettsia</taxon>
        <taxon>typhus group</taxon>
    </lineage>
</organism>
<accession>Q68WJ7</accession>
<gene>
    <name evidence="1" type="primary">nuoN</name>
    <name type="ordered locus">RT0526</name>
</gene>
<protein>
    <recommendedName>
        <fullName evidence="1">NADH-quinone oxidoreductase subunit N</fullName>
        <ecNumber evidence="1">7.1.1.-</ecNumber>
    </recommendedName>
    <alternativeName>
        <fullName evidence="1">NADH dehydrogenase I subunit N</fullName>
    </alternativeName>
    <alternativeName>
        <fullName evidence="1">NDH-1 subunit N</fullName>
    </alternativeName>
</protein>
<keyword id="KW-0997">Cell inner membrane</keyword>
<keyword id="KW-1003">Cell membrane</keyword>
<keyword id="KW-0472">Membrane</keyword>
<keyword id="KW-0520">NAD</keyword>
<keyword id="KW-0874">Quinone</keyword>
<keyword id="KW-1278">Translocase</keyword>
<keyword id="KW-0812">Transmembrane</keyword>
<keyword id="KW-1133">Transmembrane helix</keyword>
<keyword id="KW-0813">Transport</keyword>
<keyword id="KW-0830">Ubiquinone</keyword>
<comment type="function">
    <text evidence="1">NDH-1 shuttles electrons from NADH, via FMN and iron-sulfur (Fe-S) centers, to quinones in the respiratory chain. The immediate electron acceptor for the enzyme in this species is believed to be ubiquinone. Couples the redox reaction to proton translocation (for every two electrons transferred, four hydrogen ions are translocated across the cytoplasmic membrane), and thus conserves the redox energy in a proton gradient.</text>
</comment>
<comment type="catalytic activity">
    <reaction evidence="1">
        <text>a quinone + NADH + 5 H(+)(in) = a quinol + NAD(+) + 4 H(+)(out)</text>
        <dbReference type="Rhea" id="RHEA:57888"/>
        <dbReference type="ChEBI" id="CHEBI:15378"/>
        <dbReference type="ChEBI" id="CHEBI:24646"/>
        <dbReference type="ChEBI" id="CHEBI:57540"/>
        <dbReference type="ChEBI" id="CHEBI:57945"/>
        <dbReference type="ChEBI" id="CHEBI:132124"/>
    </reaction>
</comment>
<comment type="subunit">
    <text evidence="1">NDH-1 is composed of 14 different subunits. Subunits NuoA, H, J, K, L, M, N constitute the membrane sector of the complex.</text>
</comment>
<comment type="subcellular location">
    <subcellularLocation>
        <location evidence="1">Cell inner membrane</location>
        <topology evidence="1">Multi-pass membrane protein</topology>
    </subcellularLocation>
</comment>
<comment type="similarity">
    <text evidence="1">Belongs to the complex I subunit 2 family.</text>
</comment>
<name>NUON_RICTY</name>
<feature type="chain" id="PRO_0000272333" description="NADH-quinone oxidoreductase subunit N">
    <location>
        <begin position="1"/>
        <end position="458"/>
    </location>
</feature>
<feature type="transmembrane region" description="Helical" evidence="1">
    <location>
        <begin position="2"/>
        <end position="22"/>
    </location>
</feature>
<feature type="transmembrane region" description="Helical" evidence="1">
    <location>
        <begin position="30"/>
        <end position="50"/>
    </location>
</feature>
<feature type="transmembrane region" description="Helical" evidence="1">
    <location>
        <begin position="62"/>
        <end position="82"/>
    </location>
</feature>
<feature type="transmembrane region" description="Helical" evidence="1">
    <location>
        <begin position="93"/>
        <end position="113"/>
    </location>
</feature>
<feature type="transmembrane region" description="Helical" evidence="1">
    <location>
        <begin position="118"/>
        <end position="138"/>
    </location>
</feature>
<feature type="transmembrane region" description="Helical" evidence="1">
    <location>
        <begin position="153"/>
        <end position="173"/>
    </location>
</feature>
<feature type="transmembrane region" description="Helical" evidence="1">
    <location>
        <begin position="196"/>
        <end position="216"/>
    </location>
</feature>
<feature type="transmembrane region" description="Helical" evidence="1">
    <location>
        <begin position="235"/>
        <end position="255"/>
    </location>
</feature>
<feature type="transmembrane region" description="Helical" evidence="1">
    <location>
        <begin position="261"/>
        <end position="281"/>
    </location>
</feature>
<feature type="transmembrane region" description="Helical" evidence="1">
    <location>
        <begin position="290"/>
        <end position="310"/>
    </location>
</feature>
<feature type="transmembrane region" description="Helical" evidence="1">
    <location>
        <begin position="319"/>
        <end position="339"/>
    </location>
</feature>
<feature type="transmembrane region" description="Helical" evidence="1">
    <location>
        <begin position="361"/>
        <end position="381"/>
    </location>
</feature>
<feature type="transmembrane region" description="Helical" evidence="1">
    <location>
        <begin position="397"/>
        <end position="417"/>
    </location>
</feature>
<feature type="transmembrane region" description="Helical" evidence="1">
    <location>
        <begin position="438"/>
        <end position="458"/>
    </location>
</feature>
<evidence type="ECO:0000255" key="1">
    <source>
        <dbReference type="HAMAP-Rule" id="MF_00445"/>
    </source>
</evidence>
<reference key="1">
    <citation type="journal article" date="2004" name="J. Bacteriol.">
        <title>Complete genome sequence of Rickettsia typhi and comparison with sequences of other Rickettsiae.</title>
        <authorList>
            <person name="McLeod M.P."/>
            <person name="Qin X."/>
            <person name="Karpathy S.E."/>
            <person name="Gioia J."/>
            <person name="Highlander S.K."/>
            <person name="Fox G.E."/>
            <person name="McNeill T.Z."/>
            <person name="Jiang H."/>
            <person name="Muzny D."/>
            <person name="Jacob L.S."/>
            <person name="Hawes A.C."/>
            <person name="Sodergren E."/>
            <person name="Gill R."/>
            <person name="Hume J."/>
            <person name="Morgan M."/>
            <person name="Fan G."/>
            <person name="Amin A.G."/>
            <person name="Gibbs R.A."/>
            <person name="Hong C."/>
            <person name="Yu X.-J."/>
            <person name="Walker D.H."/>
            <person name="Weinstock G.M."/>
        </authorList>
    </citation>
    <scope>NUCLEOTIDE SEQUENCE [LARGE SCALE GENOMIC DNA]</scope>
    <source>
        <strain>ATCC VR-144 / Wilmington</strain>
    </source>
</reference>